<organism>
    <name type="scientific">Corynebacterium diphtheriae (strain ATCC 700971 / NCTC 13129 / Biotype gravis)</name>
    <dbReference type="NCBI Taxonomy" id="257309"/>
    <lineage>
        <taxon>Bacteria</taxon>
        <taxon>Bacillati</taxon>
        <taxon>Actinomycetota</taxon>
        <taxon>Actinomycetes</taxon>
        <taxon>Mycobacteriales</taxon>
        <taxon>Corynebacteriaceae</taxon>
        <taxon>Corynebacterium</taxon>
    </lineage>
</organism>
<gene>
    <name evidence="1" type="primary">ctaB</name>
    <name type="ordered locus">DIP1301</name>
</gene>
<dbReference type="EC" id="2.5.1.141" evidence="1"/>
<dbReference type="EMBL" id="BX248357">
    <property type="protein sequence ID" value="CAE49829.1"/>
    <property type="status" value="ALT_INIT"/>
    <property type="molecule type" value="Genomic_DNA"/>
</dbReference>
<dbReference type="SMR" id="Q6NH44"/>
<dbReference type="STRING" id="257309.DIP1301"/>
<dbReference type="KEGG" id="cdi:DIP1301"/>
<dbReference type="HOGENOM" id="CLU_029631_0_1_11"/>
<dbReference type="UniPathway" id="UPA00834">
    <property type="reaction ID" value="UER00712"/>
</dbReference>
<dbReference type="Proteomes" id="UP000002198">
    <property type="component" value="Chromosome"/>
</dbReference>
<dbReference type="GO" id="GO:0005886">
    <property type="term" value="C:plasma membrane"/>
    <property type="evidence" value="ECO:0007669"/>
    <property type="project" value="UniProtKB-SubCell"/>
</dbReference>
<dbReference type="GO" id="GO:0008495">
    <property type="term" value="F:protoheme IX farnesyltransferase activity"/>
    <property type="evidence" value="ECO:0007669"/>
    <property type="project" value="UniProtKB-UniRule"/>
</dbReference>
<dbReference type="GO" id="GO:0048034">
    <property type="term" value="P:heme O biosynthetic process"/>
    <property type="evidence" value="ECO:0007669"/>
    <property type="project" value="UniProtKB-UniRule"/>
</dbReference>
<dbReference type="CDD" id="cd13957">
    <property type="entry name" value="PT_UbiA_Cox10"/>
    <property type="match status" value="1"/>
</dbReference>
<dbReference type="Gene3D" id="1.10.357.140">
    <property type="entry name" value="UbiA prenyltransferase"/>
    <property type="match status" value="1"/>
</dbReference>
<dbReference type="HAMAP" id="MF_00154">
    <property type="entry name" value="CyoE_CtaB"/>
    <property type="match status" value="1"/>
</dbReference>
<dbReference type="InterPro" id="IPR006369">
    <property type="entry name" value="Protohaem_IX_farnesylTrfase"/>
</dbReference>
<dbReference type="InterPro" id="IPR000537">
    <property type="entry name" value="UbiA_prenyltransferase"/>
</dbReference>
<dbReference type="InterPro" id="IPR030470">
    <property type="entry name" value="UbiA_prenylTrfase_CS"/>
</dbReference>
<dbReference type="InterPro" id="IPR044878">
    <property type="entry name" value="UbiA_sf"/>
</dbReference>
<dbReference type="NCBIfam" id="TIGR01473">
    <property type="entry name" value="cyoE_ctaB"/>
    <property type="match status" value="1"/>
</dbReference>
<dbReference type="NCBIfam" id="NF003349">
    <property type="entry name" value="PRK04375.1-2"/>
    <property type="match status" value="1"/>
</dbReference>
<dbReference type="PANTHER" id="PTHR43448:SF7">
    <property type="entry name" value="4-HYDROXYBENZOATE SOLANESYLTRANSFERASE"/>
    <property type="match status" value="1"/>
</dbReference>
<dbReference type="PANTHER" id="PTHR43448">
    <property type="entry name" value="PROTOHEME IX FARNESYLTRANSFERASE, MITOCHONDRIAL"/>
    <property type="match status" value="1"/>
</dbReference>
<dbReference type="Pfam" id="PF01040">
    <property type="entry name" value="UbiA"/>
    <property type="match status" value="1"/>
</dbReference>
<dbReference type="PROSITE" id="PS00943">
    <property type="entry name" value="UBIA"/>
    <property type="match status" value="1"/>
</dbReference>
<keyword id="KW-1003">Cell membrane</keyword>
<keyword id="KW-0350">Heme biosynthesis</keyword>
<keyword id="KW-0472">Membrane</keyword>
<keyword id="KW-1185">Reference proteome</keyword>
<keyword id="KW-0808">Transferase</keyword>
<keyword id="KW-0812">Transmembrane</keyword>
<keyword id="KW-1133">Transmembrane helix</keyword>
<protein>
    <recommendedName>
        <fullName evidence="1">Protoheme IX farnesyltransferase</fullName>
        <ecNumber evidence="1">2.5.1.141</ecNumber>
    </recommendedName>
    <alternativeName>
        <fullName evidence="1">Heme B farnesyltransferase</fullName>
    </alternativeName>
    <alternativeName>
        <fullName evidence="1">Heme O synthase</fullName>
    </alternativeName>
</protein>
<reference key="1">
    <citation type="journal article" date="2003" name="Nucleic Acids Res.">
        <title>The complete genome sequence and analysis of Corynebacterium diphtheriae NCTC13129.</title>
        <authorList>
            <person name="Cerdeno-Tarraga A.-M."/>
            <person name="Efstratiou A."/>
            <person name="Dover L.G."/>
            <person name="Holden M.T.G."/>
            <person name="Pallen M.J."/>
            <person name="Bentley S.D."/>
            <person name="Besra G.S."/>
            <person name="Churcher C.M."/>
            <person name="James K.D."/>
            <person name="De Zoysa A."/>
            <person name="Chillingworth T."/>
            <person name="Cronin A."/>
            <person name="Dowd L."/>
            <person name="Feltwell T."/>
            <person name="Hamlin N."/>
            <person name="Holroyd S."/>
            <person name="Jagels K."/>
            <person name="Moule S."/>
            <person name="Quail M.A."/>
            <person name="Rabbinowitsch E."/>
            <person name="Rutherford K.M."/>
            <person name="Thomson N.R."/>
            <person name="Unwin L."/>
            <person name="Whitehead S."/>
            <person name="Barrell B.G."/>
            <person name="Parkhill J."/>
        </authorList>
    </citation>
    <scope>NUCLEOTIDE SEQUENCE [LARGE SCALE GENOMIC DNA]</scope>
    <source>
        <strain>ATCC 700971 / NCTC 13129 / Biotype gravis</strain>
    </source>
</reference>
<evidence type="ECO:0000255" key="1">
    <source>
        <dbReference type="HAMAP-Rule" id="MF_00154"/>
    </source>
</evidence>
<evidence type="ECO:0000305" key="2"/>
<proteinExistence type="inferred from homology"/>
<sequence length="317" mass="35443">MNMLEETLETIKAYVALTKPRVIELLLVATIPAMLQAERGENNIGLILLTLLGGWMGAAAANTFNMVADSDIDQKMGRTRARPLVRNKVSNRHASVFAWTLTVVSFLWLWVLCRSVLAGLFILLTIFFYIFVYTKYLKRKTHLNIVWGGAAGCMPVVVGWAVITDNLPAGTPAQWWQAIVLFMVIFFWTPPHTWALAMKYKDDYARAGVPMLPVVRTPVEVTRQIVWYTVATVLTTFLLIPAASWIHAIIAVVSGVWFLVMAVRLHNGIKNGGEVKPLKLFILSNNYLAVYFVGLSIDAVLGWETIGGHLGWTTTFF</sequence>
<comment type="function">
    <text evidence="1">Converts heme B (protoheme IX) to heme O by substitution of the vinyl group on carbon 2 of heme B porphyrin ring with a hydroxyethyl farnesyl side group.</text>
</comment>
<comment type="catalytic activity">
    <reaction evidence="1">
        <text>heme b + (2E,6E)-farnesyl diphosphate + H2O = Fe(II)-heme o + diphosphate</text>
        <dbReference type="Rhea" id="RHEA:28070"/>
        <dbReference type="ChEBI" id="CHEBI:15377"/>
        <dbReference type="ChEBI" id="CHEBI:33019"/>
        <dbReference type="ChEBI" id="CHEBI:60344"/>
        <dbReference type="ChEBI" id="CHEBI:60530"/>
        <dbReference type="ChEBI" id="CHEBI:175763"/>
        <dbReference type="EC" id="2.5.1.141"/>
    </reaction>
</comment>
<comment type="pathway">
    <text evidence="1">Porphyrin-containing compound metabolism; heme O biosynthesis; heme O from protoheme: step 1/1.</text>
</comment>
<comment type="subcellular location">
    <subcellularLocation>
        <location evidence="1">Cell membrane</location>
        <topology evidence="1">Multi-pass membrane protein</topology>
    </subcellularLocation>
</comment>
<comment type="miscellaneous">
    <text evidence="1">Carbon 2 of the heme B porphyrin ring is defined according to the Fischer nomenclature.</text>
</comment>
<comment type="similarity">
    <text evidence="1">Belongs to the UbiA prenyltransferase family. Protoheme IX farnesyltransferase subfamily.</text>
</comment>
<comment type="sequence caution" evidence="2">
    <conflict type="erroneous initiation">
        <sequence resource="EMBL-CDS" id="CAE49829"/>
    </conflict>
</comment>
<name>COXX_CORDI</name>
<accession>Q6NH44</accession>
<feature type="chain" id="PRO_0000327040" description="Protoheme IX farnesyltransferase">
    <location>
        <begin position="1"/>
        <end position="317"/>
    </location>
</feature>
<feature type="transmembrane region" description="Helical" evidence="1">
    <location>
        <begin position="44"/>
        <end position="64"/>
    </location>
</feature>
<feature type="transmembrane region" description="Helical" evidence="1">
    <location>
        <begin position="93"/>
        <end position="113"/>
    </location>
</feature>
<feature type="transmembrane region" description="Helical" evidence="1">
    <location>
        <begin position="116"/>
        <end position="136"/>
    </location>
</feature>
<feature type="transmembrane region" description="Helical" evidence="1">
    <location>
        <begin position="143"/>
        <end position="163"/>
    </location>
</feature>
<feature type="transmembrane region" description="Helical" evidence="1">
    <location>
        <begin position="178"/>
        <end position="198"/>
    </location>
</feature>
<feature type="transmembrane region" description="Helical" evidence="1">
    <location>
        <begin position="221"/>
        <end position="241"/>
    </location>
</feature>
<feature type="transmembrane region" description="Helical" evidence="1">
    <location>
        <begin position="243"/>
        <end position="263"/>
    </location>
</feature>
<feature type="transmembrane region" description="Helical" evidence="1">
    <location>
        <begin position="288"/>
        <end position="308"/>
    </location>
</feature>